<sequence length="420" mass="48615">MPLQVSDYSWQQTKTAVFLSLPLKGVCVRDTDVFCMENYLKVNFPPFLFEAFLYAPIDDESSKAKIGNDTIVFTLYKKEAAMWETLSVTGVDKEMMQRIREKSILQAQERAKEATEAKAAAKREDQKYALSVMMKIEEEERKKIEDMKENERIKATKELEAWKEYQRKAEEQKKIQREEKLCQKEKQIKEERKKIKYKSLTRNLASRNLAPKGRNSENIFTEKLKEDSIPAPRSVGSIKINFTPRVFPTALRESQVAEEEEWLHKQAEARRAMNTDIAELCDLKEEEKNPEWLKDKGNKLFATENYLAAINAYNLAIRLNNKMPLLYLNRAACHLKLKNLHKAIEDSSKALELLMPPVTDNANARMKAHVRRGTAFCQLELYVEGLQDYEAALKIDPSNKIVQIDAEKIRNVIQGTELKS</sequence>
<accession>Q863A7</accession>
<dbReference type="EMBL" id="AY178591">
    <property type="protein sequence ID" value="AAO22534.1"/>
    <property type="molecule type" value="Genomic_DNA"/>
</dbReference>
<dbReference type="EMBL" id="AY178583">
    <property type="protein sequence ID" value="AAO22534.1"/>
    <property type="status" value="JOINED"/>
    <property type="molecule type" value="Genomic_DNA"/>
</dbReference>
<dbReference type="EMBL" id="AY178584">
    <property type="protein sequence ID" value="AAO22534.1"/>
    <property type="status" value="JOINED"/>
    <property type="molecule type" value="Genomic_DNA"/>
</dbReference>
<dbReference type="EMBL" id="AY178585">
    <property type="protein sequence ID" value="AAO22534.1"/>
    <property type="status" value="JOINED"/>
    <property type="molecule type" value="Genomic_DNA"/>
</dbReference>
<dbReference type="EMBL" id="AY178586">
    <property type="protein sequence ID" value="AAO22534.1"/>
    <property type="status" value="JOINED"/>
    <property type="molecule type" value="Genomic_DNA"/>
</dbReference>
<dbReference type="EMBL" id="AY178587">
    <property type="protein sequence ID" value="AAO22534.1"/>
    <property type="status" value="JOINED"/>
    <property type="molecule type" value="Genomic_DNA"/>
</dbReference>
<dbReference type="EMBL" id="AY178588">
    <property type="protein sequence ID" value="AAO22534.1"/>
    <property type="status" value="JOINED"/>
    <property type="molecule type" value="Genomic_DNA"/>
</dbReference>
<dbReference type="EMBL" id="AY178589">
    <property type="protein sequence ID" value="AAO22534.1"/>
    <property type="status" value="JOINED"/>
    <property type="molecule type" value="Genomic_DNA"/>
</dbReference>
<dbReference type="EMBL" id="AY178590">
    <property type="protein sequence ID" value="AAO22534.1"/>
    <property type="status" value="JOINED"/>
    <property type="molecule type" value="Genomic_DNA"/>
</dbReference>
<dbReference type="SMR" id="Q863A7"/>
<dbReference type="STRING" id="9598.ENSPTRP00000063710"/>
<dbReference type="PaxDb" id="9598-ENSPTRP00000012133"/>
<dbReference type="eggNOG" id="KOG1124">
    <property type="taxonomic scope" value="Eukaryota"/>
</dbReference>
<dbReference type="InParanoid" id="Q863A7"/>
<dbReference type="Proteomes" id="UP000002277">
    <property type="component" value="Unplaced"/>
</dbReference>
<dbReference type="GO" id="GO:0005737">
    <property type="term" value="C:cytoplasm"/>
    <property type="evidence" value="ECO:0000250"/>
    <property type="project" value="UniProtKB"/>
</dbReference>
<dbReference type="GO" id="GO:0120293">
    <property type="term" value="C:dynein axonemal particle"/>
    <property type="evidence" value="ECO:0000250"/>
    <property type="project" value="UniProtKB"/>
</dbReference>
<dbReference type="GO" id="GO:0005576">
    <property type="term" value="C:extracellular region"/>
    <property type="evidence" value="ECO:0007669"/>
    <property type="project" value="GOC"/>
</dbReference>
<dbReference type="GO" id="GO:0043005">
    <property type="term" value="C:neuron projection"/>
    <property type="evidence" value="ECO:0007669"/>
    <property type="project" value="UniProtKB-SubCell"/>
</dbReference>
<dbReference type="GO" id="GO:0005634">
    <property type="term" value="C:nucleus"/>
    <property type="evidence" value="ECO:0000250"/>
    <property type="project" value="UniProtKB"/>
</dbReference>
<dbReference type="GO" id="GO:0030331">
    <property type="term" value="F:nuclear estrogen receptor binding"/>
    <property type="evidence" value="ECO:0000250"/>
    <property type="project" value="UniProtKB"/>
</dbReference>
<dbReference type="GO" id="GO:0003341">
    <property type="term" value="P:cilium movement"/>
    <property type="evidence" value="ECO:0000250"/>
    <property type="project" value="UniProtKB"/>
</dbReference>
<dbReference type="GO" id="GO:0007368">
    <property type="term" value="P:determination of left/right symmetry"/>
    <property type="evidence" value="ECO:0000250"/>
    <property type="project" value="UniProtKB"/>
</dbReference>
<dbReference type="GO" id="GO:0003351">
    <property type="term" value="P:epithelial cilium movement involved in extracellular fluid movement"/>
    <property type="evidence" value="ECO:0000318"/>
    <property type="project" value="GO_Central"/>
</dbReference>
<dbReference type="GO" id="GO:0007507">
    <property type="term" value="P:heart development"/>
    <property type="evidence" value="ECO:0000318"/>
    <property type="project" value="GO_Central"/>
</dbReference>
<dbReference type="GO" id="GO:0036159">
    <property type="term" value="P:inner dynein arm assembly"/>
    <property type="evidence" value="ECO:0000250"/>
    <property type="project" value="UniProtKB"/>
</dbReference>
<dbReference type="GO" id="GO:0001764">
    <property type="term" value="P:neuron migration"/>
    <property type="evidence" value="ECO:0000250"/>
    <property type="project" value="UniProtKB"/>
</dbReference>
<dbReference type="GO" id="GO:0036158">
    <property type="term" value="P:outer dynein arm assembly"/>
    <property type="evidence" value="ECO:0000250"/>
    <property type="project" value="UniProtKB"/>
</dbReference>
<dbReference type="GO" id="GO:0033146">
    <property type="term" value="P:regulation of intracellular estrogen receptor signaling pathway"/>
    <property type="evidence" value="ECO:0000250"/>
    <property type="project" value="UniProtKB"/>
</dbReference>
<dbReference type="GO" id="GO:0061136">
    <property type="term" value="P:regulation of proteasomal protein catabolic process"/>
    <property type="evidence" value="ECO:0000250"/>
    <property type="project" value="UniProtKB"/>
</dbReference>
<dbReference type="CDD" id="cd06469">
    <property type="entry name" value="p23_DYX1C1_like"/>
    <property type="match status" value="1"/>
</dbReference>
<dbReference type="FunFam" id="1.25.40.10:FF:000176">
    <property type="entry name" value="dynein assembly factor 4, axonemal isoform X1"/>
    <property type="match status" value="1"/>
</dbReference>
<dbReference type="FunFam" id="2.60.40.790:FF:000015">
    <property type="entry name" value="dynein assembly factor 4, axonemal isoform X1"/>
    <property type="match status" value="1"/>
</dbReference>
<dbReference type="Gene3D" id="2.60.40.790">
    <property type="match status" value="1"/>
</dbReference>
<dbReference type="Gene3D" id="1.25.40.10">
    <property type="entry name" value="Tetratricopeptide repeat domain"/>
    <property type="match status" value="1"/>
</dbReference>
<dbReference type="InterPro" id="IPR007052">
    <property type="entry name" value="CS_dom"/>
</dbReference>
<dbReference type="InterPro" id="IPR037894">
    <property type="entry name" value="CS_DYX1C1"/>
</dbReference>
<dbReference type="InterPro" id="IPR052004">
    <property type="entry name" value="Dynein_assembly_factor_4"/>
</dbReference>
<dbReference type="InterPro" id="IPR008978">
    <property type="entry name" value="HSP20-like_chaperone"/>
</dbReference>
<dbReference type="InterPro" id="IPR011990">
    <property type="entry name" value="TPR-like_helical_dom_sf"/>
</dbReference>
<dbReference type="InterPro" id="IPR019734">
    <property type="entry name" value="TPR_rpt"/>
</dbReference>
<dbReference type="PANTHER" id="PTHR46492">
    <property type="entry name" value="DYNEIN ASSEMBLY FACTOR 4, AXONEMAL"/>
    <property type="match status" value="1"/>
</dbReference>
<dbReference type="PANTHER" id="PTHR46492:SF1">
    <property type="entry name" value="DYNEIN AXONEMAL ASSEMBLY FACTOR 4"/>
    <property type="match status" value="1"/>
</dbReference>
<dbReference type="Pfam" id="PF04969">
    <property type="entry name" value="CS"/>
    <property type="match status" value="1"/>
</dbReference>
<dbReference type="SMART" id="SM00028">
    <property type="entry name" value="TPR"/>
    <property type="match status" value="3"/>
</dbReference>
<dbReference type="SUPFAM" id="SSF49764">
    <property type="entry name" value="HSP20-like chaperones"/>
    <property type="match status" value="1"/>
</dbReference>
<dbReference type="SUPFAM" id="SSF48452">
    <property type="entry name" value="TPR-like"/>
    <property type="match status" value="1"/>
</dbReference>
<dbReference type="PROSITE" id="PS51203">
    <property type="entry name" value="CS"/>
    <property type="match status" value="1"/>
</dbReference>
<dbReference type="PROSITE" id="PS50005">
    <property type="entry name" value="TPR"/>
    <property type="match status" value="3"/>
</dbReference>
<dbReference type="PROSITE" id="PS50293">
    <property type="entry name" value="TPR_REGION"/>
    <property type="match status" value="1"/>
</dbReference>
<gene>
    <name evidence="5" type="primary">DNAAF4</name>
    <name type="synonym">DYX1C1</name>
    <name type="synonym">EKN1</name>
</gene>
<protein>
    <recommendedName>
        <fullName evidence="5">Dynein axonemal assembly factor 4</fullName>
    </recommendedName>
    <alternativeName>
        <fullName evidence="5">Dyslexia susceptibility 1 candidate gene 1 protein homolog</fullName>
    </alternativeName>
</protein>
<proteinExistence type="inferred from homology"/>
<evidence type="ECO:0000250" key="1"/>
<evidence type="ECO:0000250" key="2">
    <source>
        <dbReference type="UniProtKB" id="Q5VJS5"/>
    </source>
</evidence>
<evidence type="ECO:0000250" key="3">
    <source>
        <dbReference type="UniProtKB" id="Q6AZN0"/>
    </source>
</evidence>
<evidence type="ECO:0000250" key="4">
    <source>
        <dbReference type="UniProtKB" id="Q8R368"/>
    </source>
</evidence>
<evidence type="ECO:0000250" key="5">
    <source>
        <dbReference type="UniProtKB" id="Q8WXU2"/>
    </source>
</evidence>
<evidence type="ECO:0000255" key="6">
    <source>
        <dbReference type="PROSITE-ProRule" id="PRU00547"/>
    </source>
</evidence>
<name>DAAF4_PANTR</name>
<feature type="chain" id="PRO_0000106287" description="Dynein axonemal assembly factor 4">
    <location>
        <begin position="1"/>
        <end position="420"/>
    </location>
</feature>
<feature type="domain" description="CS" evidence="6">
    <location>
        <begin position="3"/>
        <end position="87"/>
    </location>
</feature>
<feature type="repeat" description="TPR 1">
    <location>
        <begin position="290"/>
        <end position="323"/>
    </location>
</feature>
<feature type="repeat" description="TPR 2">
    <location>
        <begin position="324"/>
        <end position="357"/>
    </location>
</feature>
<feature type="repeat" description="TPR 3">
    <location>
        <begin position="366"/>
        <end position="399"/>
    </location>
</feature>
<feature type="region of interest" description="Mediates interaction with ESR1 and STUB1" evidence="1">
    <location>
        <begin position="7"/>
        <end position="103"/>
    </location>
</feature>
<organism>
    <name type="scientific">Pan troglodytes</name>
    <name type="common">Chimpanzee</name>
    <dbReference type="NCBI Taxonomy" id="9598"/>
    <lineage>
        <taxon>Eukaryota</taxon>
        <taxon>Metazoa</taxon>
        <taxon>Chordata</taxon>
        <taxon>Craniata</taxon>
        <taxon>Vertebrata</taxon>
        <taxon>Euteleostomi</taxon>
        <taxon>Mammalia</taxon>
        <taxon>Eutheria</taxon>
        <taxon>Euarchontoglires</taxon>
        <taxon>Primates</taxon>
        <taxon>Haplorrhini</taxon>
        <taxon>Catarrhini</taxon>
        <taxon>Hominidae</taxon>
        <taxon>Pan</taxon>
    </lineage>
</organism>
<reference key="1">
    <citation type="journal article" date="2003" name="Proc. Natl. Acad. Sci. U.S.A.">
        <title>A candidate gene for developmental dyslexia encodes a nuclear tetratricopeptide repeat domain protein dynamically regulated in brain.</title>
        <authorList>
            <person name="Taipale M."/>
            <person name="Kaminen N."/>
            <person name="Nopola-Hemmi J."/>
            <person name="Haltia T."/>
            <person name="Myllyluoma B."/>
            <person name="Lyytinen H."/>
            <person name="Muller K."/>
            <person name="Kaaranen M."/>
            <person name="Lindsberg P.J."/>
            <person name="Hannula-Jouppi K."/>
            <person name="Kere J."/>
        </authorList>
    </citation>
    <scope>NUCLEOTIDE SEQUENCE [GENOMIC DNA]</scope>
</reference>
<comment type="function">
    <text evidence="4 5">Involved in neuronal migration during development of the cerebral neocortex. May regulate the stability and proteasomal degradation of the estrogen receptors that play an important role in neuronal differentiation, survival and plasticity. Axonemal dynein assembly factor required for ciliary motility (By similarity).</text>
</comment>
<comment type="subunit">
    <text evidence="4 5">Interacts with ZMYND10 (By similarity). Interacts with STUB1 (By similarity). Interacts with ESR1 and ESR2. Interacts with DNAAF2 (By similarity). Interacts with CCT3, CCT4, CCT5 and CCT8 (By similarity). Interacts with DNAAF6/PIH1D3 (By similarity).</text>
</comment>
<comment type="subcellular location">
    <subcellularLocation>
        <location evidence="5">Nucleus</location>
    </subcellularLocation>
    <subcellularLocation>
        <location evidence="2">Cytoplasm</location>
    </subcellularLocation>
    <subcellularLocation>
        <location evidence="2">Cell projection</location>
        <location evidence="2">Neuron projection</location>
    </subcellularLocation>
    <subcellularLocation>
        <location evidence="3">Dynein axonemal particle</location>
    </subcellularLocation>
</comment>
<keyword id="KW-0966">Cell projection</keyword>
<keyword id="KW-0963">Cytoplasm</keyword>
<keyword id="KW-0524">Neurogenesis</keyword>
<keyword id="KW-0539">Nucleus</keyword>
<keyword id="KW-1185">Reference proteome</keyword>
<keyword id="KW-0677">Repeat</keyword>
<keyword id="KW-0802">TPR repeat</keyword>